<sequence length="324" mass="34904">MAFAKISQVAHYVPEQVVTNHDLAQIMDTNDEWISSRTGIRQRHISRTESTSDLATEVAKKLMAKAGITGEELDFIILATITPDSMMPSTAARVQANIGANKAFAFDLTAACSGFVFALSTAEKFIASGRFQKGLVIGSETLSKAVDWSDRSTAVLFGDGAGGVLLEASEQEHFLAESLNSDGSRSECLTYGHSGLHSPFSDQESADSFLKMDGRTVFDFAIRDVAKSIKQTIDESPIEVTDLDYLLLHQANDRILDKMARKIGVDRAKLPANMMEYGNTSAASIPILLSECVEQGLIPLDGSQTVLLSGFGGGLTWGTLILTI</sequence>
<organism>
    <name type="scientific">Streptococcus pneumoniae (strain Hungary19A-6)</name>
    <dbReference type="NCBI Taxonomy" id="487214"/>
    <lineage>
        <taxon>Bacteria</taxon>
        <taxon>Bacillati</taxon>
        <taxon>Bacillota</taxon>
        <taxon>Bacilli</taxon>
        <taxon>Lactobacillales</taxon>
        <taxon>Streptococcaceae</taxon>
        <taxon>Streptococcus</taxon>
    </lineage>
</organism>
<dbReference type="EC" id="2.3.1.180" evidence="1"/>
<dbReference type="EMBL" id="CP000936">
    <property type="protein sequence ID" value="ACA36928.1"/>
    <property type="molecule type" value="Genomic_DNA"/>
</dbReference>
<dbReference type="RefSeq" id="WP_000852948.1">
    <property type="nucleotide sequence ID" value="NC_010380.1"/>
</dbReference>
<dbReference type="SMR" id="B1I9L1"/>
<dbReference type="KEGG" id="spv:SPH_0525"/>
<dbReference type="HOGENOM" id="CLU_039592_4_1_9"/>
<dbReference type="UniPathway" id="UPA00094"/>
<dbReference type="Proteomes" id="UP000002163">
    <property type="component" value="Chromosome"/>
</dbReference>
<dbReference type="GO" id="GO:0005737">
    <property type="term" value="C:cytoplasm"/>
    <property type="evidence" value="ECO:0007669"/>
    <property type="project" value="UniProtKB-SubCell"/>
</dbReference>
<dbReference type="GO" id="GO:0004315">
    <property type="term" value="F:3-oxoacyl-[acyl-carrier-protein] synthase activity"/>
    <property type="evidence" value="ECO:0007669"/>
    <property type="project" value="InterPro"/>
</dbReference>
<dbReference type="GO" id="GO:0033818">
    <property type="term" value="F:beta-ketoacyl-acyl-carrier-protein synthase III activity"/>
    <property type="evidence" value="ECO:0007669"/>
    <property type="project" value="UniProtKB-UniRule"/>
</dbReference>
<dbReference type="GO" id="GO:0006633">
    <property type="term" value="P:fatty acid biosynthetic process"/>
    <property type="evidence" value="ECO:0007669"/>
    <property type="project" value="UniProtKB-UniRule"/>
</dbReference>
<dbReference type="CDD" id="cd00830">
    <property type="entry name" value="KAS_III"/>
    <property type="match status" value="1"/>
</dbReference>
<dbReference type="Gene3D" id="3.40.47.10">
    <property type="match status" value="1"/>
</dbReference>
<dbReference type="HAMAP" id="MF_01815">
    <property type="entry name" value="FabH"/>
    <property type="match status" value="1"/>
</dbReference>
<dbReference type="InterPro" id="IPR013747">
    <property type="entry name" value="ACP_syn_III_C"/>
</dbReference>
<dbReference type="InterPro" id="IPR013751">
    <property type="entry name" value="ACP_syn_III_N"/>
</dbReference>
<dbReference type="InterPro" id="IPR004655">
    <property type="entry name" value="FabH"/>
</dbReference>
<dbReference type="InterPro" id="IPR016039">
    <property type="entry name" value="Thiolase-like"/>
</dbReference>
<dbReference type="NCBIfam" id="TIGR00747">
    <property type="entry name" value="fabH"/>
    <property type="match status" value="1"/>
</dbReference>
<dbReference type="NCBIfam" id="NF006829">
    <property type="entry name" value="PRK09352.1"/>
    <property type="match status" value="1"/>
</dbReference>
<dbReference type="PANTHER" id="PTHR43091">
    <property type="entry name" value="3-OXOACYL-[ACYL-CARRIER-PROTEIN] SYNTHASE"/>
    <property type="match status" value="1"/>
</dbReference>
<dbReference type="PANTHER" id="PTHR43091:SF1">
    <property type="entry name" value="BETA-KETOACYL-[ACYL-CARRIER-PROTEIN] SYNTHASE III, CHLOROPLASTIC"/>
    <property type="match status" value="1"/>
</dbReference>
<dbReference type="Pfam" id="PF08545">
    <property type="entry name" value="ACP_syn_III"/>
    <property type="match status" value="1"/>
</dbReference>
<dbReference type="Pfam" id="PF08541">
    <property type="entry name" value="ACP_syn_III_C"/>
    <property type="match status" value="1"/>
</dbReference>
<dbReference type="SUPFAM" id="SSF53901">
    <property type="entry name" value="Thiolase-like"/>
    <property type="match status" value="1"/>
</dbReference>
<keyword id="KW-0012">Acyltransferase</keyword>
<keyword id="KW-0963">Cytoplasm</keyword>
<keyword id="KW-0275">Fatty acid biosynthesis</keyword>
<keyword id="KW-0276">Fatty acid metabolism</keyword>
<keyword id="KW-0444">Lipid biosynthesis</keyword>
<keyword id="KW-0443">Lipid metabolism</keyword>
<keyword id="KW-0511">Multifunctional enzyme</keyword>
<keyword id="KW-0808">Transferase</keyword>
<comment type="function">
    <text evidence="1">Catalyzes the condensation reaction of fatty acid synthesis by the addition to an acyl acceptor of two carbons from malonyl-ACP. Catalyzes the first condensation reaction which initiates fatty acid synthesis and may therefore play a role in governing the total rate of fatty acid production. Possesses both acetoacetyl-ACP synthase and acetyl transacylase activities. Its substrate specificity determines the biosynthesis of branched-chain and/or straight-chain of fatty acids.</text>
</comment>
<comment type="catalytic activity">
    <reaction evidence="1">
        <text>malonyl-[ACP] + acetyl-CoA + H(+) = 3-oxobutanoyl-[ACP] + CO2 + CoA</text>
        <dbReference type="Rhea" id="RHEA:12080"/>
        <dbReference type="Rhea" id="RHEA-COMP:9623"/>
        <dbReference type="Rhea" id="RHEA-COMP:9625"/>
        <dbReference type="ChEBI" id="CHEBI:15378"/>
        <dbReference type="ChEBI" id="CHEBI:16526"/>
        <dbReference type="ChEBI" id="CHEBI:57287"/>
        <dbReference type="ChEBI" id="CHEBI:57288"/>
        <dbReference type="ChEBI" id="CHEBI:78449"/>
        <dbReference type="ChEBI" id="CHEBI:78450"/>
        <dbReference type="EC" id="2.3.1.180"/>
    </reaction>
</comment>
<comment type="pathway">
    <text evidence="1">Lipid metabolism; fatty acid biosynthesis.</text>
</comment>
<comment type="subunit">
    <text evidence="1">Homodimer.</text>
</comment>
<comment type="subcellular location">
    <subcellularLocation>
        <location evidence="1">Cytoplasm</location>
    </subcellularLocation>
</comment>
<comment type="domain">
    <text evidence="1">The last Arg residue of the ACP-binding site is essential for the weak association between ACP/AcpP and FabH.</text>
</comment>
<comment type="similarity">
    <text evidence="1">Belongs to the thiolase-like superfamily. FabH family.</text>
</comment>
<proteinExistence type="inferred from homology"/>
<name>FABH_STRPI</name>
<feature type="chain" id="PRO_1000187900" description="Beta-ketoacyl-[acyl-carrier-protein] synthase III">
    <location>
        <begin position="1"/>
        <end position="324"/>
    </location>
</feature>
<feature type="region of interest" description="ACP-binding" evidence="1">
    <location>
        <begin position="250"/>
        <end position="254"/>
    </location>
</feature>
<feature type="active site" evidence="1">
    <location>
        <position position="112"/>
    </location>
</feature>
<feature type="active site" evidence="1">
    <location>
        <position position="249"/>
    </location>
</feature>
<feature type="active site" evidence="1">
    <location>
        <position position="279"/>
    </location>
</feature>
<evidence type="ECO:0000255" key="1">
    <source>
        <dbReference type="HAMAP-Rule" id="MF_01815"/>
    </source>
</evidence>
<accession>B1I9L1</accession>
<gene>
    <name evidence="1" type="primary">fabH</name>
    <name type="ordered locus">SPH_0525</name>
</gene>
<protein>
    <recommendedName>
        <fullName evidence="1">Beta-ketoacyl-[acyl-carrier-protein] synthase III</fullName>
        <shortName evidence="1">Beta-ketoacyl-ACP synthase III</shortName>
        <shortName evidence="1">KAS III</shortName>
        <ecNumber evidence="1">2.3.1.180</ecNumber>
    </recommendedName>
    <alternativeName>
        <fullName evidence="1">3-oxoacyl-[acyl-carrier-protein] synthase 3</fullName>
    </alternativeName>
    <alternativeName>
        <fullName evidence="1">3-oxoacyl-[acyl-carrier-protein] synthase III</fullName>
    </alternativeName>
</protein>
<reference key="1">
    <citation type="journal article" date="2010" name="Genome Biol.">
        <title>Structure and dynamics of the pan-genome of Streptococcus pneumoniae and closely related species.</title>
        <authorList>
            <person name="Donati C."/>
            <person name="Hiller N.L."/>
            <person name="Tettelin H."/>
            <person name="Muzzi A."/>
            <person name="Croucher N.J."/>
            <person name="Angiuoli S.V."/>
            <person name="Oggioni M."/>
            <person name="Dunning Hotopp J.C."/>
            <person name="Hu F.Z."/>
            <person name="Riley D.R."/>
            <person name="Covacci A."/>
            <person name="Mitchell T.J."/>
            <person name="Bentley S.D."/>
            <person name="Kilian M."/>
            <person name="Ehrlich G.D."/>
            <person name="Rappuoli R."/>
            <person name="Moxon E.R."/>
            <person name="Masignani V."/>
        </authorList>
    </citation>
    <scope>NUCLEOTIDE SEQUENCE [LARGE SCALE GENOMIC DNA]</scope>
    <source>
        <strain>Hungary19A-6</strain>
    </source>
</reference>